<sequence>MNEQLHNRTMAFAGILQAIAQVQYLARHGESDTDELAASLHTILVTDPETPADVYQDKAGLHKGYQLVLNQLGDSSQKDVEITRYLVGILALERKLARSNSGLSMLAERINQVNRQLHHFAITDEQVIANLASIYSDIISNLGPKIQISGNPLCLQRPIVQQKIRALLLAAMRSAVLWRQLGGKRRHLVFARKAILDTAKKSLTL</sequence>
<accession>Q8EDV9</accession>
<gene>
    <name evidence="1" type="primary">hflD</name>
    <name type="ordered locus">SO_2634</name>
</gene>
<keyword id="KW-0997">Cell inner membrane</keyword>
<keyword id="KW-1003">Cell membrane</keyword>
<keyword id="KW-0963">Cytoplasm</keyword>
<keyword id="KW-0472">Membrane</keyword>
<keyword id="KW-1185">Reference proteome</keyword>
<proteinExistence type="inferred from homology"/>
<evidence type="ECO:0000255" key="1">
    <source>
        <dbReference type="HAMAP-Rule" id="MF_00695"/>
    </source>
</evidence>
<dbReference type="EMBL" id="AE014299">
    <property type="protein sequence ID" value="AAN55662.1"/>
    <property type="molecule type" value="Genomic_DNA"/>
</dbReference>
<dbReference type="RefSeq" id="NP_718218.1">
    <property type="nucleotide sequence ID" value="NC_004347.2"/>
</dbReference>
<dbReference type="RefSeq" id="WP_011072581.1">
    <property type="nucleotide sequence ID" value="NC_004347.2"/>
</dbReference>
<dbReference type="SMR" id="Q8EDV9"/>
<dbReference type="STRING" id="211586.SO_2634"/>
<dbReference type="PaxDb" id="211586-SO_2634"/>
<dbReference type="KEGG" id="son:SO_2634"/>
<dbReference type="PATRIC" id="fig|211586.12.peg.2537"/>
<dbReference type="eggNOG" id="COG2915">
    <property type="taxonomic scope" value="Bacteria"/>
</dbReference>
<dbReference type="HOGENOM" id="CLU_098920_0_0_6"/>
<dbReference type="OrthoDB" id="9788031at2"/>
<dbReference type="PhylomeDB" id="Q8EDV9"/>
<dbReference type="BioCyc" id="SONE211586:G1GMP-2419-MONOMER"/>
<dbReference type="Proteomes" id="UP000008186">
    <property type="component" value="Chromosome"/>
</dbReference>
<dbReference type="GO" id="GO:0005737">
    <property type="term" value="C:cytoplasm"/>
    <property type="evidence" value="ECO:0007669"/>
    <property type="project" value="UniProtKB-SubCell"/>
</dbReference>
<dbReference type="GO" id="GO:0005886">
    <property type="term" value="C:plasma membrane"/>
    <property type="evidence" value="ECO:0007669"/>
    <property type="project" value="UniProtKB-SubCell"/>
</dbReference>
<dbReference type="Gene3D" id="1.10.3890.10">
    <property type="entry name" value="HflD-like"/>
    <property type="match status" value="1"/>
</dbReference>
<dbReference type="HAMAP" id="MF_00695">
    <property type="entry name" value="HflD_protein"/>
    <property type="match status" value="1"/>
</dbReference>
<dbReference type="InterPro" id="IPR007451">
    <property type="entry name" value="HflD"/>
</dbReference>
<dbReference type="InterPro" id="IPR035932">
    <property type="entry name" value="HflD-like_sf"/>
</dbReference>
<dbReference type="NCBIfam" id="NF001246">
    <property type="entry name" value="PRK00218.1-2"/>
    <property type="match status" value="1"/>
</dbReference>
<dbReference type="NCBIfam" id="NF001248">
    <property type="entry name" value="PRK00218.1-4"/>
    <property type="match status" value="1"/>
</dbReference>
<dbReference type="PANTHER" id="PTHR38100">
    <property type="entry name" value="HIGH FREQUENCY LYSOGENIZATION PROTEIN HFLD"/>
    <property type="match status" value="1"/>
</dbReference>
<dbReference type="PANTHER" id="PTHR38100:SF1">
    <property type="entry name" value="HIGH FREQUENCY LYSOGENIZATION PROTEIN HFLD"/>
    <property type="match status" value="1"/>
</dbReference>
<dbReference type="Pfam" id="PF04356">
    <property type="entry name" value="DUF489"/>
    <property type="match status" value="1"/>
</dbReference>
<dbReference type="SUPFAM" id="SSF101322">
    <property type="entry name" value="YcfC-like"/>
    <property type="match status" value="1"/>
</dbReference>
<organism>
    <name type="scientific">Shewanella oneidensis (strain ATCC 700550 / JCM 31522 / CIP 106686 / LMG 19005 / NCIMB 14063 / MR-1)</name>
    <dbReference type="NCBI Taxonomy" id="211586"/>
    <lineage>
        <taxon>Bacteria</taxon>
        <taxon>Pseudomonadati</taxon>
        <taxon>Pseudomonadota</taxon>
        <taxon>Gammaproteobacteria</taxon>
        <taxon>Alteromonadales</taxon>
        <taxon>Shewanellaceae</taxon>
        <taxon>Shewanella</taxon>
    </lineage>
</organism>
<protein>
    <recommendedName>
        <fullName evidence="1">High frequency lysogenization protein HflD homolog</fullName>
    </recommendedName>
</protein>
<reference key="1">
    <citation type="journal article" date="2002" name="Nat. Biotechnol.">
        <title>Genome sequence of the dissimilatory metal ion-reducing bacterium Shewanella oneidensis.</title>
        <authorList>
            <person name="Heidelberg J.F."/>
            <person name="Paulsen I.T."/>
            <person name="Nelson K.E."/>
            <person name="Gaidos E.J."/>
            <person name="Nelson W.C."/>
            <person name="Read T.D."/>
            <person name="Eisen J.A."/>
            <person name="Seshadri R."/>
            <person name="Ward N.L."/>
            <person name="Methe B.A."/>
            <person name="Clayton R.A."/>
            <person name="Meyer T."/>
            <person name="Tsapin A."/>
            <person name="Scott J."/>
            <person name="Beanan M.J."/>
            <person name="Brinkac L.M."/>
            <person name="Daugherty S.C."/>
            <person name="DeBoy R.T."/>
            <person name="Dodson R.J."/>
            <person name="Durkin A.S."/>
            <person name="Haft D.H."/>
            <person name="Kolonay J.F."/>
            <person name="Madupu R."/>
            <person name="Peterson J.D."/>
            <person name="Umayam L.A."/>
            <person name="White O."/>
            <person name="Wolf A.M."/>
            <person name="Vamathevan J.J."/>
            <person name="Weidman J.F."/>
            <person name="Impraim M."/>
            <person name="Lee K."/>
            <person name="Berry K.J."/>
            <person name="Lee C."/>
            <person name="Mueller J."/>
            <person name="Khouri H.M."/>
            <person name="Gill J."/>
            <person name="Utterback T.R."/>
            <person name="McDonald L.A."/>
            <person name="Feldblyum T.V."/>
            <person name="Smith H.O."/>
            <person name="Venter J.C."/>
            <person name="Nealson K.H."/>
            <person name="Fraser C.M."/>
        </authorList>
    </citation>
    <scope>NUCLEOTIDE SEQUENCE [LARGE SCALE GENOMIC DNA]</scope>
    <source>
        <strain>ATCC 700550 / JCM 31522 / CIP 106686 / LMG 19005 / NCIMB 14063 / MR-1</strain>
    </source>
</reference>
<comment type="subcellular location">
    <subcellularLocation>
        <location>Cytoplasm</location>
    </subcellularLocation>
    <subcellularLocation>
        <location evidence="1">Cell inner membrane</location>
        <topology evidence="1">Peripheral membrane protein</topology>
        <orientation evidence="1">Cytoplasmic side</orientation>
    </subcellularLocation>
</comment>
<comment type="similarity">
    <text evidence="1">Belongs to the HflD family.</text>
</comment>
<name>HFLD_SHEON</name>
<feature type="chain" id="PRO_0000071588" description="High frequency lysogenization protein HflD homolog">
    <location>
        <begin position="1"/>
        <end position="205"/>
    </location>
</feature>